<gene>
    <name evidence="1" type="primary">pcm</name>
    <name type="ordered locus">xcc-b100_2552</name>
</gene>
<accession>B0RTZ8</accession>
<proteinExistence type="inferred from homology"/>
<evidence type="ECO:0000255" key="1">
    <source>
        <dbReference type="HAMAP-Rule" id="MF_00090"/>
    </source>
</evidence>
<organism>
    <name type="scientific">Xanthomonas campestris pv. campestris (strain B100)</name>
    <dbReference type="NCBI Taxonomy" id="509169"/>
    <lineage>
        <taxon>Bacteria</taxon>
        <taxon>Pseudomonadati</taxon>
        <taxon>Pseudomonadota</taxon>
        <taxon>Gammaproteobacteria</taxon>
        <taxon>Lysobacterales</taxon>
        <taxon>Lysobacteraceae</taxon>
        <taxon>Xanthomonas</taxon>
    </lineage>
</organism>
<comment type="function">
    <text evidence="1">Catalyzes the methyl esterification of L-isoaspartyl residues in peptides and proteins that result from spontaneous decomposition of normal L-aspartyl and L-asparaginyl residues. It plays a role in the repair and/or degradation of damaged proteins.</text>
</comment>
<comment type="catalytic activity">
    <reaction evidence="1">
        <text>[protein]-L-isoaspartate + S-adenosyl-L-methionine = [protein]-L-isoaspartate alpha-methyl ester + S-adenosyl-L-homocysteine</text>
        <dbReference type="Rhea" id="RHEA:12705"/>
        <dbReference type="Rhea" id="RHEA-COMP:12143"/>
        <dbReference type="Rhea" id="RHEA-COMP:12144"/>
        <dbReference type="ChEBI" id="CHEBI:57856"/>
        <dbReference type="ChEBI" id="CHEBI:59789"/>
        <dbReference type="ChEBI" id="CHEBI:90596"/>
        <dbReference type="ChEBI" id="CHEBI:90598"/>
        <dbReference type="EC" id="2.1.1.77"/>
    </reaction>
</comment>
<comment type="subcellular location">
    <subcellularLocation>
        <location evidence="1">Cytoplasm</location>
    </subcellularLocation>
</comment>
<comment type="similarity">
    <text evidence="1">Belongs to the methyltransferase superfamily. L-isoaspartyl/D-aspartyl protein methyltransferase family.</text>
</comment>
<name>PIMT_XANCB</name>
<protein>
    <recommendedName>
        <fullName evidence="1">Protein-L-isoaspartate O-methyltransferase</fullName>
        <ecNumber evidence="1">2.1.1.77</ecNumber>
    </recommendedName>
    <alternativeName>
        <fullName evidence="1">L-isoaspartyl protein carboxyl methyltransferase</fullName>
    </alternativeName>
    <alternativeName>
        <fullName evidence="1">Protein L-isoaspartyl methyltransferase</fullName>
    </alternativeName>
    <alternativeName>
        <fullName evidence="1">Protein-beta-aspartate methyltransferase</fullName>
        <shortName evidence="1">PIMT</shortName>
    </alternativeName>
</protein>
<reference key="1">
    <citation type="journal article" date="2008" name="J. Biotechnol.">
        <title>The genome of Xanthomonas campestris pv. campestris B100 and its use for the reconstruction of metabolic pathways involved in xanthan biosynthesis.</title>
        <authorList>
            <person name="Vorhoelter F.-J."/>
            <person name="Schneiker S."/>
            <person name="Goesmann A."/>
            <person name="Krause L."/>
            <person name="Bekel T."/>
            <person name="Kaiser O."/>
            <person name="Linke B."/>
            <person name="Patschkowski T."/>
            <person name="Rueckert C."/>
            <person name="Schmid J."/>
            <person name="Sidhu V.K."/>
            <person name="Sieber V."/>
            <person name="Tauch A."/>
            <person name="Watt S.A."/>
            <person name="Weisshaar B."/>
            <person name="Becker A."/>
            <person name="Niehaus K."/>
            <person name="Puehler A."/>
        </authorList>
    </citation>
    <scope>NUCLEOTIDE SEQUENCE [LARGE SCALE GENOMIC DNA]</scope>
    <source>
        <strain>B100</strain>
    </source>
</reference>
<keyword id="KW-0963">Cytoplasm</keyword>
<keyword id="KW-0489">Methyltransferase</keyword>
<keyword id="KW-0949">S-adenosyl-L-methionine</keyword>
<keyword id="KW-0808">Transferase</keyword>
<dbReference type="EC" id="2.1.1.77" evidence="1"/>
<dbReference type="EMBL" id="AM920689">
    <property type="protein sequence ID" value="CAP51912.1"/>
    <property type="molecule type" value="Genomic_DNA"/>
</dbReference>
<dbReference type="SMR" id="B0RTZ8"/>
<dbReference type="KEGG" id="xca:xcc-b100_2552"/>
<dbReference type="HOGENOM" id="CLU_055432_2_0_6"/>
<dbReference type="Proteomes" id="UP000001188">
    <property type="component" value="Chromosome"/>
</dbReference>
<dbReference type="GO" id="GO:0005737">
    <property type="term" value="C:cytoplasm"/>
    <property type="evidence" value="ECO:0007669"/>
    <property type="project" value="UniProtKB-SubCell"/>
</dbReference>
<dbReference type="GO" id="GO:0004719">
    <property type="term" value="F:protein-L-isoaspartate (D-aspartate) O-methyltransferase activity"/>
    <property type="evidence" value="ECO:0007669"/>
    <property type="project" value="UniProtKB-UniRule"/>
</dbReference>
<dbReference type="GO" id="GO:0032259">
    <property type="term" value="P:methylation"/>
    <property type="evidence" value="ECO:0007669"/>
    <property type="project" value="UniProtKB-KW"/>
</dbReference>
<dbReference type="GO" id="GO:0036211">
    <property type="term" value="P:protein modification process"/>
    <property type="evidence" value="ECO:0007669"/>
    <property type="project" value="UniProtKB-UniRule"/>
</dbReference>
<dbReference type="GO" id="GO:0030091">
    <property type="term" value="P:protein repair"/>
    <property type="evidence" value="ECO:0007669"/>
    <property type="project" value="UniProtKB-UniRule"/>
</dbReference>
<dbReference type="CDD" id="cd02440">
    <property type="entry name" value="AdoMet_MTases"/>
    <property type="match status" value="1"/>
</dbReference>
<dbReference type="FunFam" id="3.40.50.150:FF:000010">
    <property type="entry name" value="Protein-L-isoaspartate O-methyltransferase"/>
    <property type="match status" value="1"/>
</dbReference>
<dbReference type="Gene3D" id="3.40.50.150">
    <property type="entry name" value="Vaccinia Virus protein VP39"/>
    <property type="match status" value="1"/>
</dbReference>
<dbReference type="HAMAP" id="MF_00090">
    <property type="entry name" value="PIMT"/>
    <property type="match status" value="1"/>
</dbReference>
<dbReference type="InterPro" id="IPR000682">
    <property type="entry name" value="PCMT"/>
</dbReference>
<dbReference type="InterPro" id="IPR029063">
    <property type="entry name" value="SAM-dependent_MTases_sf"/>
</dbReference>
<dbReference type="NCBIfam" id="TIGR00080">
    <property type="entry name" value="pimt"/>
    <property type="match status" value="1"/>
</dbReference>
<dbReference type="NCBIfam" id="NF001453">
    <property type="entry name" value="PRK00312.1"/>
    <property type="match status" value="1"/>
</dbReference>
<dbReference type="PANTHER" id="PTHR11579">
    <property type="entry name" value="PROTEIN-L-ISOASPARTATE O-METHYLTRANSFERASE"/>
    <property type="match status" value="1"/>
</dbReference>
<dbReference type="PANTHER" id="PTHR11579:SF0">
    <property type="entry name" value="PROTEIN-L-ISOASPARTATE(D-ASPARTATE) O-METHYLTRANSFERASE"/>
    <property type="match status" value="1"/>
</dbReference>
<dbReference type="Pfam" id="PF01135">
    <property type="entry name" value="PCMT"/>
    <property type="match status" value="1"/>
</dbReference>
<dbReference type="SUPFAM" id="SSF53335">
    <property type="entry name" value="S-adenosyl-L-methionine-dependent methyltransferases"/>
    <property type="match status" value="1"/>
</dbReference>
<dbReference type="PROSITE" id="PS01279">
    <property type="entry name" value="PCMT"/>
    <property type="match status" value="1"/>
</dbReference>
<sequence length="225" mass="24209">MTPRLRLQPESVGIGMTSQRVRDRLVERLRESGIQDEATLNAVRTVPRHLFIDEALASRAYEDTALPIGHGQTISQPWVVARMTEAVLQVAPKKVLEVGTGSGYQGAILAALGLEVYTVERIGDLLRQARKRFRHLGMNVRSKHDDGRIGWPEHGPYDAIVVTAAAPALVDALVDQLAVGGRLVAPVGGASSQSLVQLTRGADGEIAQEVLAPVTFVPLLSGMLD</sequence>
<feature type="chain" id="PRO_0000351954" description="Protein-L-isoaspartate O-methyltransferase">
    <location>
        <begin position="1"/>
        <end position="225"/>
    </location>
</feature>
<feature type="active site" evidence="1">
    <location>
        <position position="75"/>
    </location>
</feature>